<dbReference type="EC" id="3.1.3.18" evidence="1"/>
<dbReference type="EMBL" id="AE003849">
    <property type="protein sequence ID" value="AAF85268.1"/>
    <property type="molecule type" value="Genomic_DNA"/>
</dbReference>
<dbReference type="PIR" id="G82553">
    <property type="entry name" value="G82553"/>
</dbReference>
<dbReference type="RefSeq" id="WP_010894913.1">
    <property type="nucleotide sequence ID" value="NC_002488.3"/>
</dbReference>
<dbReference type="SMR" id="Q9PAM6"/>
<dbReference type="STRING" id="160492.XF_2470"/>
<dbReference type="KEGG" id="xfa:XF_2470"/>
<dbReference type="eggNOG" id="COG0546">
    <property type="taxonomic scope" value="Bacteria"/>
</dbReference>
<dbReference type="HOGENOM" id="CLU_045011_19_1_6"/>
<dbReference type="UniPathway" id="UPA00865">
    <property type="reaction ID" value="UER00834"/>
</dbReference>
<dbReference type="Proteomes" id="UP000000812">
    <property type="component" value="Chromosome"/>
</dbReference>
<dbReference type="GO" id="GO:0005829">
    <property type="term" value="C:cytosol"/>
    <property type="evidence" value="ECO:0007669"/>
    <property type="project" value="TreeGrafter"/>
</dbReference>
<dbReference type="GO" id="GO:0046872">
    <property type="term" value="F:metal ion binding"/>
    <property type="evidence" value="ECO:0007669"/>
    <property type="project" value="UniProtKB-KW"/>
</dbReference>
<dbReference type="GO" id="GO:0008967">
    <property type="term" value="F:phosphoglycolate phosphatase activity"/>
    <property type="evidence" value="ECO:0007669"/>
    <property type="project" value="UniProtKB-UniRule"/>
</dbReference>
<dbReference type="GO" id="GO:0005975">
    <property type="term" value="P:carbohydrate metabolic process"/>
    <property type="evidence" value="ECO:0007669"/>
    <property type="project" value="InterPro"/>
</dbReference>
<dbReference type="GO" id="GO:0006281">
    <property type="term" value="P:DNA repair"/>
    <property type="evidence" value="ECO:0007669"/>
    <property type="project" value="TreeGrafter"/>
</dbReference>
<dbReference type="GO" id="GO:0046295">
    <property type="term" value="P:glycolate biosynthetic process"/>
    <property type="evidence" value="ECO:0007669"/>
    <property type="project" value="UniProtKB-UniRule"/>
</dbReference>
<dbReference type="FunFam" id="3.40.50.1000:FF:000022">
    <property type="entry name" value="Phosphoglycolate phosphatase"/>
    <property type="match status" value="1"/>
</dbReference>
<dbReference type="Gene3D" id="3.40.50.1000">
    <property type="entry name" value="HAD superfamily/HAD-like"/>
    <property type="match status" value="1"/>
</dbReference>
<dbReference type="Gene3D" id="1.10.150.240">
    <property type="entry name" value="Putative phosphatase, domain 2"/>
    <property type="match status" value="1"/>
</dbReference>
<dbReference type="HAMAP" id="MF_00495">
    <property type="entry name" value="GPH_hydrolase_bact"/>
    <property type="match status" value="1"/>
</dbReference>
<dbReference type="InterPro" id="IPR050155">
    <property type="entry name" value="HAD-like_hydrolase_sf"/>
</dbReference>
<dbReference type="InterPro" id="IPR036412">
    <property type="entry name" value="HAD-like_sf"/>
</dbReference>
<dbReference type="InterPro" id="IPR006439">
    <property type="entry name" value="HAD-SF_hydro_IA"/>
</dbReference>
<dbReference type="InterPro" id="IPR041492">
    <property type="entry name" value="HAD_2"/>
</dbReference>
<dbReference type="InterPro" id="IPR023214">
    <property type="entry name" value="HAD_sf"/>
</dbReference>
<dbReference type="InterPro" id="IPR023198">
    <property type="entry name" value="PGP-like_dom2"/>
</dbReference>
<dbReference type="InterPro" id="IPR037512">
    <property type="entry name" value="PGPase_prok"/>
</dbReference>
<dbReference type="NCBIfam" id="TIGR01549">
    <property type="entry name" value="HAD-SF-IA-v1"/>
    <property type="match status" value="1"/>
</dbReference>
<dbReference type="NCBIfam" id="TIGR01509">
    <property type="entry name" value="HAD-SF-IA-v3"/>
    <property type="match status" value="1"/>
</dbReference>
<dbReference type="NCBIfam" id="TIGR01449">
    <property type="entry name" value="PGP_bact"/>
    <property type="match status" value="1"/>
</dbReference>
<dbReference type="NCBIfam" id="NF009700">
    <property type="entry name" value="PRK13226.1"/>
    <property type="match status" value="1"/>
</dbReference>
<dbReference type="PANTHER" id="PTHR43434">
    <property type="entry name" value="PHOSPHOGLYCOLATE PHOSPHATASE"/>
    <property type="match status" value="1"/>
</dbReference>
<dbReference type="PANTHER" id="PTHR43434:SF23">
    <property type="entry name" value="PHOSPHOGLYCOLATE PHOSPHATASE"/>
    <property type="match status" value="1"/>
</dbReference>
<dbReference type="Pfam" id="PF13419">
    <property type="entry name" value="HAD_2"/>
    <property type="match status" value="1"/>
</dbReference>
<dbReference type="PRINTS" id="PR00413">
    <property type="entry name" value="HADHALOGNASE"/>
</dbReference>
<dbReference type="SFLD" id="SFLDG01129">
    <property type="entry name" value="C1.5:_HAD__Beta-PGM__Phosphata"/>
    <property type="match status" value="1"/>
</dbReference>
<dbReference type="SFLD" id="SFLDS00003">
    <property type="entry name" value="Haloacid_Dehalogenase"/>
    <property type="match status" value="1"/>
</dbReference>
<dbReference type="SUPFAM" id="SSF56784">
    <property type="entry name" value="HAD-like"/>
    <property type="match status" value="1"/>
</dbReference>
<keyword id="KW-0119">Carbohydrate metabolism</keyword>
<keyword id="KW-0378">Hydrolase</keyword>
<keyword id="KW-0460">Magnesium</keyword>
<keyword id="KW-0479">Metal-binding</keyword>
<feature type="chain" id="PRO_0000108048" description="Phosphoglycolate phosphatase">
    <location>
        <begin position="1"/>
        <end position="229"/>
    </location>
</feature>
<feature type="active site" description="Nucleophile" evidence="1">
    <location>
        <position position="18"/>
    </location>
</feature>
<feature type="binding site" evidence="1">
    <location>
        <position position="18"/>
    </location>
    <ligand>
        <name>Mg(2+)</name>
        <dbReference type="ChEBI" id="CHEBI:18420"/>
    </ligand>
</feature>
<feature type="binding site" evidence="1">
    <location>
        <position position="20"/>
    </location>
    <ligand>
        <name>Mg(2+)</name>
        <dbReference type="ChEBI" id="CHEBI:18420"/>
    </ligand>
</feature>
<feature type="binding site" evidence="1">
    <location>
        <position position="176"/>
    </location>
    <ligand>
        <name>Mg(2+)</name>
        <dbReference type="ChEBI" id="CHEBI:18420"/>
    </ligand>
</feature>
<gene>
    <name evidence="1" type="primary">gph</name>
    <name type="ordered locus">XF_2470</name>
</gene>
<name>GPH_XYLFA</name>
<evidence type="ECO:0000255" key="1">
    <source>
        <dbReference type="HAMAP-Rule" id="MF_00495"/>
    </source>
</evidence>
<sequence>MPLNEPSSNAFPRTVLFDLDGTLLDSAPDMLATANAMLAARGRAPITLAQLRPVISIGTFRILAVAFPELDAAAIQGLIPEFLQRYEALIGSVSKPFDGVEMMLDALECAGTVWGIVTNKPEFLARLILPLLGWTSRCAVLIGGDTLAERKPHPLPLLTAAERIGVMPTDCVYVGDDVSDIQAARAAGMPSMVALWGYRSHEDNPMTWQADTLVEQPHLLSRPDVWPST</sequence>
<accession>Q9PAM6</accession>
<reference key="1">
    <citation type="journal article" date="2000" name="Nature">
        <title>The genome sequence of the plant pathogen Xylella fastidiosa.</title>
        <authorList>
            <person name="Simpson A.J.G."/>
            <person name="Reinach F.C."/>
            <person name="Arruda P."/>
            <person name="Abreu F.A."/>
            <person name="Acencio M."/>
            <person name="Alvarenga R."/>
            <person name="Alves L.M.C."/>
            <person name="Araya J.E."/>
            <person name="Baia G.S."/>
            <person name="Baptista C.S."/>
            <person name="Barros M.H."/>
            <person name="Bonaccorsi E.D."/>
            <person name="Bordin S."/>
            <person name="Bove J.M."/>
            <person name="Briones M.R.S."/>
            <person name="Bueno M.R.P."/>
            <person name="Camargo A.A."/>
            <person name="Camargo L.E.A."/>
            <person name="Carraro D.M."/>
            <person name="Carrer H."/>
            <person name="Colauto N.B."/>
            <person name="Colombo C."/>
            <person name="Costa F.F."/>
            <person name="Costa M.C.R."/>
            <person name="Costa-Neto C.M."/>
            <person name="Coutinho L.L."/>
            <person name="Cristofani M."/>
            <person name="Dias-Neto E."/>
            <person name="Docena C."/>
            <person name="El-Dorry H."/>
            <person name="Facincani A.P."/>
            <person name="Ferreira A.J.S."/>
            <person name="Ferreira V.C.A."/>
            <person name="Ferro J.A."/>
            <person name="Fraga J.S."/>
            <person name="Franca S.C."/>
            <person name="Franco M.C."/>
            <person name="Frohme M."/>
            <person name="Furlan L.R."/>
            <person name="Garnier M."/>
            <person name="Goldman G.H."/>
            <person name="Goldman M.H.S."/>
            <person name="Gomes S.L."/>
            <person name="Gruber A."/>
            <person name="Ho P.L."/>
            <person name="Hoheisel J.D."/>
            <person name="Junqueira M.L."/>
            <person name="Kemper E.L."/>
            <person name="Kitajima J.P."/>
            <person name="Krieger J.E."/>
            <person name="Kuramae E.E."/>
            <person name="Laigret F."/>
            <person name="Lambais M.R."/>
            <person name="Leite L.C.C."/>
            <person name="Lemos E.G.M."/>
            <person name="Lemos M.V.F."/>
            <person name="Lopes S.A."/>
            <person name="Lopes C.R."/>
            <person name="Machado J.A."/>
            <person name="Machado M.A."/>
            <person name="Madeira A.M.B.N."/>
            <person name="Madeira H.M.F."/>
            <person name="Marino C.L."/>
            <person name="Marques M.V."/>
            <person name="Martins E.A.L."/>
            <person name="Martins E.M.F."/>
            <person name="Matsukuma A.Y."/>
            <person name="Menck C.F.M."/>
            <person name="Miracca E.C."/>
            <person name="Miyaki C.Y."/>
            <person name="Monteiro-Vitorello C.B."/>
            <person name="Moon D.H."/>
            <person name="Nagai M.A."/>
            <person name="Nascimento A.L.T.O."/>
            <person name="Netto L.E.S."/>
            <person name="Nhani A. Jr."/>
            <person name="Nobrega F.G."/>
            <person name="Nunes L.R."/>
            <person name="Oliveira M.A."/>
            <person name="de Oliveira M.C."/>
            <person name="de Oliveira R.C."/>
            <person name="Palmieri D.A."/>
            <person name="Paris A."/>
            <person name="Peixoto B.R."/>
            <person name="Pereira G.A.G."/>
            <person name="Pereira H.A. Jr."/>
            <person name="Pesquero J.B."/>
            <person name="Quaggio R.B."/>
            <person name="Roberto P.G."/>
            <person name="Rodrigues V."/>
            <person name="de Rosa A.J.M."/>
            <person name="de Rosa V.E. Jr."/>
            <person name="de Sa R.G."/>
            <person name="Santelli R.V."/>
            <person name="Sawasaki H.E."/>
            <person name="da Silva A.C.R."/>
            <person name="da Silva A.M."/>
            <person name="da Silva F.R."/>
            <person name="Silva W.A. Jr."/>
            <person name="da Silveira J.F."/>
            <person name="Silvestri M.L.Z."/>
            <person name="Siqueira W.J."/>
            <person name="de Souza A.A."/>
            <person name="de Souza A.P."/>
            <person name="Terenzi M.F."/>
            <person name="Truffi D."/>
            <person name="Tsai S.M."/>
            <person name="Tsuhako M.H."/>
            <person name="Vallada H."/>
            <person name="Van Sluys M.A."/>
            <person name="Verjovski-Almeida S."/>
            <person name="Vettore A.L."/>
            <person name="Zago M.A."/>
            <person name="Zatz M."/>
            <person name="Meidanis J."/>
            <person name="Setubal J.C."/>
        </authorList>
    </citation>
    <scope>NUCLEOTIDE SEQUENCE [LARGE SCALE GENOMIC DNA]</scope>
    <source>
        <strain>9a5c</strain>
    </source>
</reference>
<comment type="function">
    <text evidence="1">Specifically catalyzes the dephosphorylation of 2-phosphoglycolate. Is involved in the dissimilation of the intracellular 2-phosphoglycolate formed during the DNA repair of 3'-phosphoglycolate ends, a major class of DNA lesions induced by oxidative stress.</text>
</comment>
<comment type="catalytic activity">
    <reaction evidence="1">
        <text>2-phosphoglycolate + H2O = glycolate + phosphate</text>
        <dbReference type="Rhea" id="RHEA:14369"/>
        <dbReference type="ChEBI" id="CHEBI:15377"/>
        <dbReference type="ChEBI" id="CHEBI:29805"/>
        <dbReference type="ChEBI" id="CHEBI:43474"/>
        <dbReference type="ChEBI" id="CHEBI:58033"/>
        <dbReference type="EC" id="3.1.3.18"/>
    </reaction>
</comment>
<comment type="cofactor">
    <cofactor evidence="1">
        <name>Mg(2+)</name>
        <dbReference type="ChEBI" id="CHEBI:18420"/>
    </cofactor>
</comment>
<comment type="pathway">
    <text evidence="1">Organic acid metabolism; glycolate biosynthesis; glycolate from 2-phosphoglycolate: step 1/1.</text>
</comment>
<comment type="similarity">
    <text evidence="1">Belongs to the HAD-like hydrolase superfamily. CbbY/CbbZ/Gph/YieH family.</text>
</comment>
<proteinExistence type="inferred from homology"/>
<protein>
    <recommendedName>
        <fullName evidence="1">Phosphoglycolate phosphatase</fullName>
        <shortName evidence="1">PGP</shortName>
        <shortName evidence="1">PGPase</shortName>
        <ecNumber evidence="1">3.1.3.18</ecNumber>
    </recommendedName>
</protein>
<organism>
    <name type="scientific">Xylella fastidiosa (strain 9a5c)</name>
    <dbReference type="NCBI Taxonomy" id="160492"/>
    <lineage>
        <taxon>Bacteria</taxon>
        <taxon>Pseudomonadati</taxon>
        <taxon>Pseudomonadota</taxon>
        <taxon>Gammaproteobacteria</taxon>
        <taxon>Lysobacterales</taxon>
        <taxon>Lysobacteraceae</taxon>
        <taxon>Xylella</taxon>
    </lineage>
</organism>